<dbReference type="EC" id="2.7.11.1"/>
<dbReference type="EMBL" id="CU329670">
    <property type="protein sequence ID" value="CAA93901.1"/>
    <property type="molecule type" value="Genomic_DNA"/>
</dbReference>
<dbReference type="PIR" id="T38171">
    <property type="entry name" value="T38171"/>
</dbReference>
<dbReference type="RefSeq" id="NP_594840.1">
    <property type="nucleotide sequence ID" value="NM_001020269.2"/>
</dbReference>
<dbReference type="SMR" id="Q10364"/>
<dbReference type="BioGRID" id="278357">
    <property type="interactions" value="206"/>
</dbReference>
<dbReference type="FunCoup" id="Q10364">
    <property type="interactions" value="62"/>
</dbReference>
<dbReference type="STRING" id="284812.Q10364"/>
<dbReference type="iPTMnet" id="Q10364"/>
<dbReference type="PaxDb" id="4896-SPAC22E12.14c.1"/>
<dbReference type="EnsemblFungi" id="SPAC22E12.14c.1">
    <property type="protein sequence ID" value="SPAC22E12.14c.1:pep"/>
    <property type="gene ID" value="SPAC22E12.14c"/>
</dbReference>
<dbReference type="GeneID" id="2541867"/>
<dbReference type="KEGG" id="spo:2541867"/>
<dbReference type="PomBase" id="SPAC22E12.14c">
    <property type="gene designation" value="sck2"/>
</dbReference>
<dbReference type="VEuPathDB" id="FungiDB:SPAC22E12.14c"/>
<dbReference type="eggNOG" id="KOG0598">
    <property type="taxonomic scope" value="Eukaryota"/>
</dbReference>
<dbReference type="HOGENOM" id="CLU_000288_52_3_1"/>
<dbReference type="InParanoid" id="Q10364"/>
<dbReference type="OMA" id="HEPSGYL"/>
<dbReference type="PhylomeDB" id="Q10364"/>
<dbReference type="Reactome" id="R-SPO-1257604">
    <property type="pathway name" value="PIP3 activates AKT signaling"/>
</dbReference>
<dbReference type="Reactome" id="R-SPO-1358803">
    <property type="pathway name" value="Downregulation of ERBB2:ERBB3 signaling"/>
</dbReference>
<dbReference type="Reactome" id="R-SPO-1474151">
    <property type="pathway name" value="Tetrahydrobiopterin (BH4) synthesis, recycling, salvage and regulation"/>
</dbReference>
<dbReference type="Reactome" id="R-SPO-165158">
    <property type="pathway name" value="Activation of AKT2"/>
</dbReference>
<dbReference type="Reactome" id="R-SPO-165181">
    <property type="pathway name" value="Inhibition of TSC complex formation by PKB"/>
</dbReference>
<dbReference type="Reactome" id="R-SPO-198323">
    <property type="pathway name" value="AKT phosphorylates targets in the cytosol"/>
</dbReference>
<dbReference type="Reactome" id="R-SPO-198693">
    <property type="pathway name" value="AKT phosphorylates targets in the nucleus"/>
</dbReference>
<dbReference type="Reactome" id="R-SPO-203615">
    <property type="pathway name" value="eNOS activation"/>
</dbReference>
<dbReference type="Reactome" id="R-SPO-389357">
    <property type="pathway name" value="CD28 dependent PI3K/Akt signaling"/>
</dbReference>
<dbReference type="Reactome" id="R-SPO-389513">
    <property type="pathway name" value="Co-inhibition by CTLA4"/>
</dbReference>
<dbReference type="Reactome" id="R-SPO-392451">
    <property type="pathway name" value="G beta:gamma signalling through PI3Kgamma"/>
</dbReference>
<dbReference type="Reactome" id="R-SPO-450385">
    <property type="pathway name" value="Butyrate Response Factor 1 (BRF1) binds and destabilizes mRNA"/>
</dbReference>
<dbReference type="Reactome" id="R-SPO-5218920">
    <property type="pathway name" value="VEGFR2 mediated vascular permeability"/>
</dbReference>
<dbReference type="Reactome" id="R-SPO-5628897">
    <property type="pathway name" value="TP53 Regulates Metabolic Genes"/>
</dbReference>
<dbReference type="Reactome" id="R-SPO-6804757">
    <property type="pathway name" value="Regulation of TP53 Degradation"/>
</dbReference>
<dbReference type="Reactome" id="R-SPO-6804758">
    <property type="pathway name" value="Regulation of TP53 Activity through Acetylation"/>
</dbReference>
<dbReference type="Reactome" id="R-SPO-6811558">
    <property type="pathway name" value="PI5P, PP2A and IER3 Regulate PI3K/AKT Signaling"/>
</dbReference>
<dbReference type="Reactome" id="R-SPO-8948751">
    <property type="pathway name" value="Regulation of PTEN stability and activity"/>
</dbReference>
<dbReference type="Reactome" id="R-SPO-9009391">
    <property type="pathway name" value="Extra-nuclear estrogen signaling"/>
</dbReference>
<dbReference type="Reactome" id="R-SPO-9031628">
    <property type="pathway name" value="NGF-stimulated transcription"/>
</dbReference>
<dbReference type="Reactome" id="R-SPO-9841251">
    <property type="pathway name" value="Mitochondrial unfolded protein response (UPRmt)"/>
</dbReference>
<dbReference type="Reactome" id="R-SPO-9856530">
    <property type="pathway name" value="High laminar flow shear stress activates signaling by PIEZO1 and PECAM1:CDH5:KDR in endothelial cells"/>
</dbReference>
<dbReference type="PRO" id="PR:Q10364"/>
<dbReference type="Proteomes" id="UP000002485">
    <property type="component" value="Chromosome I"/>
</dbReference>
<dbReference type="GO" id="GO:0005829">
    <property type="term" value="C:cytosol"/>
    <property type="evidence" value="ECO:0007005"/>
    <property type="project" value="PomBase"/>
</dbReference>
<dbReference type="GO" id="GO:0005635">
    <property type="term" value="C:nuclear envelope"/>
    <property type="evidence" value="ECO:0007005"/>
    <property type="project" value="PomBase"/>
</dbReference>
<dbReference type="GO" id="GO:0005524">
    <property type="term" value="F:ATP binding"/>
    <property type="evidence" value="ECO:0000255"/>
    <property type="project" value="PomBase"/>
</dbReference>
<dbReference type="GO" id="GO:0106310">
    <property type="term" value="F:protein serine kinase activity"/>
    <property type="evidence" value="ECO:0007669"/>
    <property type="project" value="RHEA"/>
</dbReference>
<dbReference type="GO" id="GO:0004674">
    <property type="term" value="F:protein serine/threonine kinase activity"/>
    <property type="evidence" value="ECO:0000315"/>
    <property type="project" value="PomBase"/>
</dbReference>
<dbReference type="GO" id="GO:0035556">
    <property type="term" value="P:intracellular signal transduction"/>
    <property type="evidence" value="ECO:0000316"/>
    <property type="project" value="PomBase"/>
</dbReference>
<dbReference type="GO" id="GO:0031138">
    <property type="term" value="P:negative regulation of conjugation with cellular fusion"/>
    <property type="evidence" value="ECO:0000316"/>
    <property type="project" value="PomBase"/>
</dbReference>
<dbReference type="GO" id="GO:0010972">
    <property type="term" value="P:negative regulation of G2/M transition of mitotic cell cycle"/>
    <property type="evidence" value="ECO:0000315"/>
    <property type="project" value="PomBase"/>
</dbReference>
<dbReference type="GO" id="GO:0038202">
    <property type="term" value="P:TORC1 signaling"/>
    <property type="evidence" value="ECO:0000353"/>
    <property type="project" value="PomBase"/>
</dbReference>
<dbReference type="FunFam" id="1.10.510.10:FF:000008">
    <property type="entry name" value="Non-specific serine/threonine protein kinase"/>
    <property type="match status" value="1"/>
</dbReference>
<dbReference type="FunFam" id="3.30.200.20:FF:000116">
    <property type="entry name" value="Non-specific serine/threonine protein kinase"/>
    <property type="match status" value="1"/>
</dbReference>
<dbReference type="Gene3D" id="3.30.200.20">
    <property type="entry name" value="Phosphorylase Kinase, domain 1"/>
    <property type="match status" value="1"/>
</dbReference>
<dbReference type="Gene3D" id="1.10.510.10">
    <property type="entry name" value="Transferase(Phosphotransferase) domain 1"/>
    <property type="match status" value="1"/>
</dbReference>
<dbReference type="InterPro" id="IPR000961">
    <property type="entry name" value="AGC-kinase_C"/>
</dbReference>
<dbReference type="InterPro" id="IPR011009">
    <property type="entry name" value="Kinase-like_dom_sf"/>
</dbReference>
<dbReference type="InterPro" id="IPR017892">
    <property type="entry name" value="Pkinase_C"/>
</dbReference>
<dbReference type="InterPro" id="IPR000719">
    <property type="entry name" value="Prot_kinase_dom"/>
</dbReference>
<dbReference type="InterPro" id="IPR017441">
    <property type="entry name" value="Protein_kinase_ATP_BS"/>
</dbReference>
<dbReference type="InterPro" id="IPR008271">
    <property type="entry name" value="Ser/Thr_kinase_AS"/>
</dbReference>
<dbReference type="PANTHER" id="PTHR24351">
    <property type="entry name" value="RIBOSOMAL PROTEIN S6 KINASE"/>
    <property type="match status" value="1"/>
</dbReference>
<dbReference type="Pfam" id="PF00069">
    <property type="entry name" value="Pkinase"/>
    <property type="match status" value="1"/>
</dbReference>
<dbReference type="Pfam" id="PF00433">
    <property type="entry name" value="Pkinase_C"/>
    <property type="match status" value="1"/>
</dbReference>
<dbReference type="SMART" id="SM00133">
    <property type="entry name" value="S_TK_X"/>
    <property type="match status" value="1"/>
</dbReference>
<dbReference type="SMART" id="SM00220">
    <property type="entry name" value="S_TKc"/>
    <property type="match status" value="1"/>
</dbReference>
<dbReference type="SUPFAM" id="SSF56112">
    <property type="entry name" value="Protein kinase-like (PK-like)"/>
    <property type="match status" value="1"/>
</dbReference>
<dbReference type="PROSITE" id="PS51285">
    <property type="entry name" value="AGC_KINASE_CTER"/>
    <property type="match status" value="1"/>
</dbReference>
<dbReference type="PROSITE" id="PS00107">
    <property type="entry name" value="PROTEIN_KINASE_ATP"/>
    <property type="match status" value="1"/>
</dbReference>
<dbReference type="PROSITE" id="PS50011">
    <property type="entry name" value="PROTEIN_KINASE_DOM"/>
    <property type="match status" value="1"/>
</dbReference>
<dbReference type="PROSITE" id="PS00108">
    <property type="entry name" value="PROTEIN_KINASE_ST"/>
    <property type="match status" value="1"/>
</dbReference>
<reference key="1">
    <citation type="journal article" date="2002" name="Nature">
        <title>The genome sequence of Schizosaccharomyces pombe.</title>
        <authorList>
            <person name="Wood V."/>
            <person name="Gwilliam R."/>
            <person name="Rajandream M.A."/>
            <person name="Lyne M.H."/>
            <person name="Lyne R."/>
            <person name="Stewart A."/>
            <person name="Sgouros J.G."/>
            <person name="Peat N."/>
            <person name="Hayles J."/>
            <person name="Baker S.G."/>
            <person name="Basham D."/>
            <person name="Bowman S."/>
            <person name="Brooks K."/>
            <person name="Brown D."/>
            <person name="Brown S."/>
            <person name="Chillingworth T."/>
            <person name="Churcher C.M."/>
            <person name="Collins M."/>
            <person name="Connor R."/>
            <person name="Cronin A."/>
            <person name="Davis P."/>
            <person name="Feltwell T."/>
            <person name="Fraser A."/>
            <person name="Gentles S."/>
            <person name="Goble A."/>
            <person name="Hamlin N."/>
            <person name="Harris D.E."/>
            <person name="Hidalgo J."/>
            <person name="Hodgson G."/>
            <person name="Holroyd S."/>
            <person name="Hornsby T."/>
            <person name="Howarth S."/>
            <person name="Huckle E.J."/>
            <person name="Hunt S."/>
            <person name="Jagels K."/>
            <person name="James K.D."/>
            <person name="Jones L."/>
            <person name="Jones M."/>
            <person name="Leather S."/>
            <person name="McDonald S."/>
            <person name="McLean J."/>
            <person name="Mooney P."/>
            <person name="Moule S."/>
            <person name="Mungall K.L."/>
            <person name="Murphy L.D."/>
            <person name="Niblett D."/>
            <person name="Odell C."/>
            <person name="Oliver K."/>
            <person name="O'Neil S."/>
            <person name="Pearson D."/>
            <person name="Quail M.A."/>
            <person name="Rabbinowitsch E."/>
            <person name="Rutherford K.M."/>
            <person name="Rutter S."/>
            <person name="Saunders D."/>
            <person name="Seeger K."/>
            <person name="Sharp S."/>
            <person name="Skelton J."/>
            <person name="Simmonds M.N."/>
            <person name="Squares R."/>
            <person name="Squares S."/>
            <person name="Stevens K."/>
            <person name="Taylor K."/>
            <person name="Taylor R.G."/>
            <person name="Tivey A."/>
            <person name="Walsh S.V."/>
            <person name="Warren T."/>
            <person name="Whitehead S."/>
            <person name="Woodward J.R."/>
            <person name="Volckaert G."/>
            <person name="Aert R."/>
            <person name="Robben J."/>
            <person name="Grymonprez B."/>
            <person name="Weltjens I."/>
            <person name="Vanstreels E."/>
            <person name="Rieger M."/>
            <person name="Schaefer M."/>
            <person name="Mueller-Auer S."/>
            <person name="Gabel C."/>
            <person name="Fuchs M."/>
            <person name="Duesterhoeft A."/>
            <person name="Fritzc C."/>
            <person name="Holzer E."/>
            <person name="Moestl D."/>
            <person name="Hilbert H."/>
            <person name="Borzym K."/>
            <person name="Langer I."/>
            <person name="Beck A."/>
            <person name="Lehrach H."/>
            <person name="Reinhardt R."/>
            <person name="Pohl T.M."/>
            <person name="Eger P."/>
            <person name="Zimmermann W."/>
            <person name="Wedler H."/>
            <person name="Wambutt R."/>
            <person name="Purnelle B."/>
            <person name="Goffeau A."/>
            <person name="Cadieu E."/>
            <person name="Dreano S."/>
            <person name="Gloux S."/>
            <person name="Lelaure V."/>
            <person name="Mottier S."/>
            <person name="Galibert F."/>
            <person name="Aves S.J."/>
            <person name="Xiang Z."/>
            <person name="Hunt C."/>
            <person name="Moore K."/>
            <person name="Hurst S.M."/>
            <person name="Lucas M."/>
            <person name="Rochet M."/>
            <person name="Gaillardin C."/>
            <person name="Tallada V.A."/>
            <person name="Garzon A."/>
            <person name="Thode G."/>
            <person name="Daga R.R."/>
            <person name="Cruzado L."/>
            <person name="Jimenez J."/>
            <person name="Sanchez M."/>
            <person name="del Rey F."/>
            <person name="Benito J."/>
            <person name="Dominguez A."/>
            <person name="Revuelta J.L."/>
            <person name="Moreno S."/>
            <person name="Armstrong J."/>
            <person name="Forsburg S.L."/>
            <person name="Cerutti L."/>
            <person name="Lowe T."/>
            <person name="McCombie W.R."/>
            <person name="Paulsen I."/>
            <person name="Potashkin J."/>
            <person name="Shpakovski G.V."/>
            <person name="Ussery D."/>
            <person name="Barrell B.G."/>
            <person name="Nurse P."/>
        </authorList>
    </citation>
    <scope>NUCLEOTIDE SEQUENCE [LARGE SCALE GENOMIC DNA]</scope>
    <source>
        <strain>972 / ATCC 24843</strain>
    </source>
</reference>
<reference key="2">
    <citation type="journal article" date="1998" name="Curr. Genet.">
        <title>S. pombe sck2+, a second homologue of S. cerevisiae SCH9 in fission yeast, encodes a putative protein kinase closely related to PKA in function.</title>
        <authorList>
            <person name="Fujita M."/>
            <person name="Yamamoto M."/>
        </authorList>
    </citation>
    <scope>FUNCTION</scope>
</reference>
<sequence>MMNKWAKNWFGLSKKSVSTNSAKGSLPRSPLASIQTNQPVEEGEGGSLPSVSNLGPSSIDHPMEEFASDQSTVGNRNSNDILPEVDHEPSGYLKLQIGSLVLGGPHTDAALAMECSRLNQLFVVVQFGTTEFVSPPLKWESPGRDIGTSSRDSANVSRSSSMMSSHPIPTPAIQRTSSIPNPLTPSYVVFDVAKPVPIDVNIYDHGNNNEFVGRTYIHPSYNYGQFEQFCNSVEVSPAYNRMVDLRLSLNTVFQPLSQHSYGPDDFVPLKLIGKGTFGQVYLVRKKDTERVYAMKVLSKKVIVRRKEVAHTVGERDILVQTSAADSPFIVALRFSFQTPKDLYLVTDYMAGGELFWHLQKSVRFPEERAKFYIAELLLALQALHKRGIVYRDLKPENILLDVQGHIALCDFGLSKANLSVGTTTRTFCGTTDYLAPEVILDEAGYDMMVDFWSLGVLLYEMTCGWSPFYADNTQQLYKNIVFGKVRFPRGLLSVEARDLIKLLLNRNPKHRLGAHGDVEEVMKHPFFDGIDWKKLAAKEISPPFKPIVEGEIDVSNFDVEFTNKAIDRDFSSTDEMSTSAPLSSTVQNGFKGFTYIDASAMDEAFGYHNSNDSASSISSQDDYSKDNSDMDLNRANDEVFMGQIDP</sequence>
<proteinExistence type="inferred from homology"/>
<name>SCK2_SCHPO</name>
<protein>
    <recommendedName>
        <fullName>Serine/threonine-protein kinase sck2</fullName>
        <ecNumber>2.7.11.1</ecNumber>
    </recommendedName>
</protein>
<evidence type="ECO:0000255" key="1">
    <source>
        <dbReference type="PROSITE-ProRule" id="PRU00159"/>
    </source>
</evidence>
<evidence type="ECO:0000255" key="2">
    <source>
        <dbReference type="PROSITE-ProRule" id="PRU00618"/>
    </source>
</evidence>
<evidence type="ECO:0000255" key="3">
    <source>
        <dbReference type="PROSITE-ProRule" id="PRU10027"/>
    </source>
</evidence>
<evidence type="ECO:0000256" key="4">
    <source>
        <dbReference type="SAM" id="MobiDB-lite"/>
    </source>
</evidence>
<evidence type="ECO:0000269" key="5">
    <source>
    </source>
</evidence>
<evidence type="ECO:0000305" key="6"/>
<organism>
    <name type="scientific">Schizosaccharomyces pombe (strain 972 / ATCC 24843)</name>
    <name type="common">Fission yeast</name>
    <dbReference type="NCBI Taxonomy" id="284812"/>
    <lineage>
        <taxon>Eukaryota</taxon>
        <taxon>Fungi</taxon>
        <taxon>Dikarya</taxon>
        <taxon>Ascomycota</taxon>
        <taxon>Taphrinomycotina</taxon>
        <taxon>Schizosaccharomycetes</taxon>
        <taxon>Schizosaccharomycetales</taxon>
        <taxon>Schizosaccharomycetaceae</taxon>
        <taxon>Schizosaccharomyces</taxon>
    </lineage>
</organism>
<feature type="chain" id="PRO_0000086640" description="Serine/threonine-protein kinase sck2">
    <location>
        <begin position="1"/>
        <end position="646"/>
    </location>
</feature>
<feature type="domain" description="Protein kinase" evidence="1">
    <location>
        <begin position="266"/>
        <end position="527"/>
    </location>
</feature>
<feature type="domain" description="AGC-kinase C-terminal" evidence="2">
    <location>
        <begin position="528"/>
        <end position="605"/>
    </location>
</feature>
<feature type="region of interest" description="Disordered" evidence="4">
    <location>
        <begin position="17"/>
        <end position="85"/>
    </location>
</feature>
<feature type="region of interest" description="Disordered" evidence="4">
    <location>
        <begin position="143"/>
        <end position="176"/>
    </location>
</feature>
<feature type="region of interest" description="Disordered" evidence="4">
    <location>
        <begin position="609"/>
        <end position="646"/>
    </location>
</feature>
<feature type="compositionally biased region" description="Polar residues" evidence="4">
    <location>
        <begin position="68"/>
        <end position="80"/>
    </location>
</feature>
<feature type="compositionally biased region" description="Low complexity" evidence="4">
    <location>
        <begin position="149"/>
        <end position="165"/>
    </location>
</feature>
<feature type="compositionally biased region" description="Low complexity" evidence="4">
    <location>
        <begin position="610"/>
        <end position="621"/>
    </location>
</feature>
<feature type="compositionally biased region" description="Basic and acidic residues" evidence="4">
    <location>
        <begin position="622"/>
        <end position="637"/>
    </location>
</feature>
<feature type="active site" description="Proton acceptor" evidence="1 3">
    <location>
        <position position="392"/>
    </location>
</feature>
<feature type="binding site" evidence="1">
    <location>
        <begin position="272"/>
        <end position="280"/>
    </location>
    <ligand>
        <name>ATP</name>
        <dbReference type="ChEBI" id="CHEBI:30616"/>
    </ligand>
</feature>
<feature type="binding site" evidence="1">
    <location>
        <position position="295"/>
    </location>
    <ligand>
        <name>ATP</name>
        <dbReference type="ChEBI" id="CHEBI:30616"/>
    </ligand>
</feature>
<keyword id="KW-0067">ATP-binding</keyword>
<keyword id="KW-0418">Kinase</keyword>
<keyword id="KW-0547">Nucleotide-binding</keyword>
<keyword id="KW-0597">Phosphoprotein</keyword>
<keyword id="KW-1185">Reference proteome</keyword>
<keyword id="KW-0723">Serine/threonine-protein kinase</keyword>
<keyword id="KW-0808">Transferase</keyword>
<gene>
    <name type="primary">sck2</name>
    <name type="ORF">SPAC22E12.14c</name>
</gene>
<comment type="function">
    <text evidence="5">Protein kinase that is part of growth control pathway which is at least partially redundant with the cAMP pathway.</text>
</comment>
<comment type="catalytic activity">
    <reaction>
        <text>L-seryl-[protein] + ATP = O-phospho-L-seryl-[protein] + ADP + H(+)</text>
        <dbReference type="Rhea" id="RHEA:17989"/>
        <dbReference type="Rhea" id="RHEA-COMP:9863"/>
        <dbReference type="Rhea" id="RHEA-COMP:11604"/>
        <dbReference type="ChEBI" id="CHEBI:15378"/>
        <dbReference type="ChEBI" id="CHEBI:29999"/>
        <dbReference type="ChEBI" id="CHEBI:30616"/>
        <dbReference type="ChEBI" id="CHEBI:83421"/>
        <dbReference type="ChEBI" id="CHEBI:456216"/>
        <dbReference type="EC" id="2.7.11.1"/>
    </reaction>
</comment>
<comment type="catalytic activity">
    <reaction>
        <text>L-threonyl-[protein] + ATP = O-phospho-L-threonyl-[protein] + ADP + H(+)</text>
        <dbReference type="Rhea" id="RHEA:46608"/>
        <dbReference type="Rhea" id="RHEA-COMP:11060"/>
        <dbReference type="Rhea" id="RHEA-COMP:11605"/>
        <dbReference type="ChEBI" id="CHEBI:15378"/>
        <dbReference type="ChEBI" id="CHEBI:30013"/>
        <dbReference type="ChEBI" id="CHEBI:30616"/>
        <dbReference type="ChEBI" id="CHEBI:61977"/>
        <dbReference type="ChEBI" id="CHEBI:456216"/>
        <dbReference type="EC" id="2.7.11.1"/>
    </reaction>
</comment>
<comment type="similarity">
    <text evidence="6">Belongs to the protein kinase superfamily. AGC Ser/Thr protein kinase family. PKC subfamily.</text>
</comment>
<accession>Q10364</accession>